<reference key="1">
    <citation type="journal article" date="1996" name="Microbiology">
        <title>Sequencing of a 65 kb region of the Bacillus subtilis genome containing the lic and cel loci, and creation of a 177 kb contig covering the gnt-sacXY region.</title>
        <authorList>
            <person name="Yoshida K."/>
            <person name="Shindo K."/>
            <person name="Sano H."/>
            <person name="Seki S."/>
            <person name="Fujimura M."/>
            <person name="Yanai N."/>
            <person name="Miwa Y."/>
            <person name="Fujita Y."/>
        </authorList>
    </citation>
    <scope>NUCLEOTIDE SEQUENCE [GENOMIC DNA]</scope>
    <source>
        <strain>168 / BGSC1A1</strain>
    </source>
</reference>
<reference key="2">
    <citation type="journal article" date="1997" name="Nature">
        <title>The complete genome sequence of the Gram-positive bacterium Bacillus subtilis.</title>
        <authorList>
            <person name="Kunst F."/>
            <person name="Ogasawara N."/>
            <person name="Moszer I."/>
            <person name="Albertini A.M."/>
            <person name="Alloni G."/>
            <person name="Azevedo V."/>
            <person name="Bertero M.G."/>
            <person name="Bessieres P."/>
            <person name="Bolotin A."/>
            <person name="Borchert S."/>
            <person name="Borriss R."/>
            <person name="Boursier L."/>
            <person name="Brans A."/>
            <person name="Braun M."/>
            <person name="Brignell S.C."/>
            <person name="Bron S."/>
            <person name="Brouillet S."/>
            <person name="Bruschi C.V."/>
            <person name="Caldwell B."/>
            <person name="Capuano V."/>
            <person name="Carter N.M."/>
            <person name="Choi S.-K."/>
            <person name="Codani J.-J."/>
            <person name="Connerton I.F."/>
            <person name="Cummings N.J."/>
            <person name="Daniel R.A."/>
            <person name="Denizot F."/>
            <person name="Devine K.M."/>
            <person name="Duesterhoeft A."/>
            <person name="Ehrlich S.D."/>
            <person name="Emmerson P.T."/>
            <person name="Entian K.-D."/>
            <person name="Errington J."/>
            <person name="Fabret C."/>
            <person name="Ferrari E."/>
            <person name="Foulger D."/>
            <person name="Fritz C."/>
            <person name="Fujita M."/>
            <person name="Fujita Y."/>
            <person name="Fuma S."/>
            <person name="Galizzi A."/>
            <person name="Galleron N."/>
            <person name="Ghim S.-Y."/>
            <person name="Glaser P."/>
            <person name="Goffeau A."/>
            <person name="Golightly E.J."/>
            <person name="Grandi G."/>
            <person name="Guiseppi G."/>
            <person name="Guy B.J."/>
            <person name="Haga K."/>
            <person name="Haiech J."/>
            <person name="Harwood C.R."/>
            <person name="Henaut A."/>
            <person name="Hilbert H."/>
            <person name="Holsappel S."/>
            <person name="Hosono S."/>
            <person name="Hullo M.-F."/>
            <person name="Itaya M."/>
            <person name="Jones L.-M."/>
            <person name="Joris B."/>
            <person name="Karamata D."/>
            <person name="Kasahara Y."/>
            <person name="Klaerr-Blanchard M."/>
            <person name="Klein C."/>
            <person name="Kobayashi Y."/>
            <person name="Koetter P."/>
            <person name="Koningstein G."/>
            <person name="Krogh S."/>
            <person name="Kumano M."/>
            <person name="Kurita K."/>
            <person name="Lapidus A."/>
            <person name="Lardinois S."/>
            <person name="Lauber J."/>
            <person name="Lazarevic V."/>
            <person name="Lee S.-M."/>
            <person name="Levine A."/>
            <person name="Liu H."/>
            <person name="Masuda S."/>
            <person name="Mauel C."/>
            <person name="Medigue C."/>
            <person name="Medina N."/>
            <person name="Mellado R.P."/>
            <person name="Mizuno M."/>
            <person name="Moestl D."/>
            <person name="Nakai S."/>
            <person name="Noback M."/>
            <person name="Noone D."/>
            <person name="O'Reilly M."/>
            <person name="Ogawa K."/>
            <person name="Ogiwara A."/>
            <person name="Oudega B."/>
            <person name="Park S.-H."/>
            <person name="Parro V."/>
            <person name="Pohl T.M."/>
            <person name="Portetelle D."/>
            <person name="Porwollik S."/>
            <person name="Prescott A.M."/>
            <person name="Presecan E."/>
            <person name="Pujic P."/>
            <person name="Purnelle B."/>
            <person name="Rapoport G."/>
            <person name="Rey M."/>
            <person name="Reynolds S."/>
            <person name="Rieger M."/>
            <person name="Rivolta C."/>
            <person name="Rocha E."/>
            <person name="Roche B."/>
            <person name="Rose M."/>
            <person name="Sadaie Y."/>
            <person name="Sato T."/>
            <person name="Scanlan E."/>
            <person name="Schleich S."/>
            <person name="Schroeter R."/>
            <person name="Scoffone F."/>
            <person name="Sekiguchi J."/>
            <person name="Sekowska A."/>
            <person name="Seror S.J."/>
            <person name="Serror P."/>
            <person name="Shin B.-S."/>
            <person name="Soldo B."/>
            <person name="Sorokin A."/>
            <person name="Tacconi E."/>
            <person name="Takagi T."/>
            <person name="Takahashi H."/>
            <person name="Takemaru K."/>
            <person name="Takeuchi M."/>
            <person name="Tamakoshi A."/>
            <person name="Tanaka T."/>
            <person name="Terpstra P."/>
            <person name="Tognoni A."/>
            <person name="Tosato V."/>
            <person name="Uchiyama S."/>
            <person name="Vandenbol M."/>
            <person name="Vannier F."/>
            <person name="Vassarotti A."/>
            <person name="Viari A."/>
            <person name="Wambutt R."/>
            <person name="Wedler E."/>
            <person name="Wedler H."/>
            <person name="Weitzenegger T."/>
            <person name="Winters P."/>
            <person name="Wipat A."/>
            <person name="Yamamoto H."/>
            <person name="Yamane K."/>
            <person name="Yasumoto K."/>
            <person name="Yata K."/>
            <person name="Yoshida K."/>
            <person name="Yoshikawa H.-F."/>
            <person name="Zumstein E."/>
            <person name="Yoshikawa H."/>
            <person name="Danchin A."/>
        </authorList>
    </citation>
    <scope>NUCLEOTIDE SEQUENCE [LARGE SCALE GENOMIC DNA]</scope>
    <source>
        <strain>168</strain>
    </source>
</reference>
<name>CYDC_BACSU</name>
<dbReference type="EC" id="7.4.2.-" evidence="1"/>
<dbReference type="EMBL" id="D83026">
    <property type="protein sequence ID" value="BAA11729.1"/>
    <property type="molecule type" value="Genomic_DNA"/>
</dbReference>
<dbReference type="EMBL" id="AL009126">
    <property type="protein sequence ID" value="CAB15900.1"/>
    <property type="molecule type" value="Genomic_DNA"/>
</dbReference>
<dbReference type="PIR" id="C69611">
    <property type="entry name" value="C69611"/>
</dbReference>
<dbReference type="RefSeq" id="NP_391753.1">
    <property type="nucleotide sequence ID" value="NC_000964.3"/>
</dbReference>
<dbReference type="SMR" id="P94366"/>
<dbReference type="FunCoup" id="P94366">
    <property type="interactions" value="141"/>
</dbReference>
<dbReference type="STRING" id="224308.BSU38740"/>
<dbReference type="PaxDb" id="224308-BSU38740"/>
<dbReference type="EnsemblBacteria" id="CAB15900">
    <property type="protein sequence ID" value="CAB15900"/>
    <property type="gene ID" value="BSU_38740"/>
</dbReference>
<dbReference type="GeneID" id="936498"/>
<dbReference type="KEGG" id="bsu:BSU38740"/>
<dbReference type="PATRIC" id="fig|224308.179.peg.4193"/>
<dbReference type="eggNOG" id="COG4988">
    <property type="taxonomic scope" value="Bacteria"/>
</dbReference>
<dbReference type="InParanoid" id="P94366"/>
<dbReference type="OrthoDB" id="9806127at2"/>
<dbReference type="PhylomeDB" id="P94366"/>
<dbReference type="BioCyc" id="BSUB:BSU38740-MONOMER"/>
<dbReference type="Proteomes" id="UP000001570">
    <property type="component" value="Chromosome"/>
</dbReference>
<dbReference type="GO" id="GO:0005886">
    <property type="term" value="C:plasma membrane"/>
    <property type="evidence" value="ECO:0007669"/>
    <property type="project" value="UniProtKB-SubCell"/>
</dbReference>
<dbReference type="GO" id="GO:0140359">
    <property type="term" value="F:ABC-type transporter activity"/>
    <property type="evidence" value="ECO:0007669"/>
    <property type="project" value="InterPro"/>
</dbReference>
<dbReference type="GO" id="GO:0005524">
    <property type="term" value="F:ATP binding"/>
    <property type="evidence" value="ECO:0007669"/>
    <property type="project" value="UniProtKB-KW"/>
</dbReference>
<dbReference type="GO" id="GO:0016887">
    <property type="term" value="F:ATP hydrolysis activity"/>
    <property type="evidence" value="ECO:0007669"/>
    <property type="project" value="InterPro"/>
</dbReference>
<dbReference type="GO" id="GO:0034040">
    <property type="term" value="F:ATPase-coupled lipid transmembrane transporter activity"/>
    <property type="evidence" value="ECO:0000318"/>
    <property type="project" value="GO_Central"/>
</dbReference>
<dbReference type="GO" id="GO:0042883">
    <property type="term" value="P:cysteine transport"/>
    <property type="evidence" value="ECO:0007669"/>
    <property type="project" value="InterPro"/>
</dbReference>
<dbReference type="GO" id="GO:0055085">
    <property type="term" value="P:transmembrane transport"/>
    <property type="evidence" value="ECO:0000318"/>
    <property type="project" value="GO_Central"/>
</dbReference>
<dbReference type="CDD" id="cd18584">
    <property type="entry name" value="ABC_6TM_AarD_CydD"/>
    <property type="match status" value="1"/>
</dbReference>
<dbReference type="FunFam" id="3.40.50.300:FF:001542">
    <property type="entry name" value="Thiol reductant ABC exporter subunit CydD"/>
    <property type="match status" value="1"/>
</dbReference>
<dbReference type="Gene3D" id="1.20.1560.10">
    <property type="entry name" value="ABC transporter type 1, transmembrane domain"/>
    <property type="match status" value="1"/>
</dbReference>
<dbReference type="Gene3D" id="3.40.50.300">
    <property type="entry name" value="P-loop containing nucleotide triphosphate hydrolases"/>
    <property type="match status" value="1"/>
</dbReference>
<dbReference type="InterPro" id="IPR003593">
    <property type="entry name" value="AAA+_ATPase"/>
</dbReference>
<dbReference type="InterPro" id="IPR011527">
    <property type="entry name" value="ABC1_TM_dom"/>
</dbReference>
<dbReference type="InterPro" id="IPR036640">
    <property type="entry name" value="ABC1_TM_sf"/>
</dbReference>
<dbReference type="InterPro" id="IPR003439">
    <property type="entry name" value="ABC_transporter-like_ATP-bd"/>
</dbReference>
<dbReference type="InterPro" id="IPR017871">
    <property type="entry name" value="ABC_transporter-like_CS"/>
</dbReference>
<dbReference type="InterPro" id="IPR014216">
    <property type="entry name" value="ABC_transptr_CydD"/>
</dbReference>
<dbReference type="InterPro" id="IPR027417">
    <property type="entry name" value="P-loop_NTPase"/>
</dbReference>
<dbReference type="InterPro" id="IPR039421">
    <property type="entry name" value="Type_1_exporter"/>
</dbReference>
<dbReference type="NCBIfam" id="TIGR02857">
    <property type="entry name" value="CydD"/>
    <property type="match status" value="1"/>
</dbReference>
<dbReference type="PANTHER" id="PTHR24221">
    <property type="entry name" value="ATP-BINDING CASSETTE SUB-FAMILY B"/>
    <property type="match status" value="1"/>
</dbReference>
<dbReference type="PANTHER" id="PTHR24221:SF614">
    <property type="entry name" value="GLUTATHIONE_L-CYSTEINE TRANSPORT SYSTEM ATP-BINDING_PERMEASE PROTEIN CYDC"/>
    <property type="match status" value="1"/>
</dbReference>
<dbReference type="Pfam" id="PF00664">
    <property type="entry name" value="ABC_membrane"/>
    <property type="match status" value="1"/>
</dbReference>
<dbReference type="Pfam" id="PF00005">
    <property type="entry name" value="ABC_tran"/>
    <property type="match status" value="1"/>
</dbReference>
<dbReference type="SMART" id="SM00382">
    <property type="entry name" value="AAA"/>
    <property type="match status" value="1"/>
</dbReference>
<dbReference type="SUPFAM" id="SSF90123">
    <property type="entry name" value="ABC transporter transmembrane region"/>
    <property type="match status" value="1"/>
</dbReference>
<dbReference type="SUPFAM" id="SSF52540">
    <property type="entry name" value="P-loop containing nucleoside triphosphate hydrolases"/>
    <property type="match status" value="1"/>
</dbReference>
<dbReference type="PROSITE" id="PS50929">
    <property type="entry name" value="ABC_TM1F"/>
    <property type="match status" value="1"/>
</dbReference>
<dbReference type="PROSITE" id="PS00211">
    <property type="entry name" value="ABC_TRANSPORTER_1"/>
    <property type="match status" value="1"/>
</dbReference>
<dbReference type="PROSITE" id="PS50893">
    <property type="entry name" value="ABC_TRANSPORTER_2"/>
    <property type="match status" value="1"/>
</dbReference>
<proteinExistence type="inferred from homology"/>
<evidence type="ECO:0000250" key="1">
    <source>
        <dbReference type="UniProtKB" id="P23886"/>
    </source>
</evidence>
<evidence type="ECO:0000255" key="2"/>
<evidence type="ECO:0000255" key="3">
    <source>
        <dbReference type="PROSITE-ProRule" id="PRU00434"/>
    </source>
</evidence>
<evidence type="ECO:0000255" key="4">
    <source>
        <dbReference type="PROSITE-ProRule" id="PRU00441"/>
    </source>
</evidence>
<evidence type="ECO:0000305" key="5"/>
<feature type="chain" id="PRO_0000092240" description="Glutathione/L-cysteine transport system ATP-binding/permease protein CydC">
    <location>
        <begin position="1"/>
        <end position="567"/>
    </location>
</feature>
<feature type="transmembrane region" description="Helical" evidence="2">
    <location>
        <begin position="14"/>
        <end position="34"/>
    </location>
</feature>
<feature type="transmembrane region" description="Helical" evidence="2">
    <location>
        <begin position="44"/>
        <end position="64"/>
    </location>
</feature>
<feature type="transmembrane region" description="Helical" evidence="2">
    <location>
        <begin position="130"/>
        <end position="150"/>
    </location>
</feature>
<feature type="transmembrane region" description="Helical" evidence="2">
    <location>
        <begin position="156"/>
        <end position="176"/>
    </location>
</feature>
<feature type="transmembrane region" description="Helical" evidence="2">
    <location>
        <begin position="240"/>
        <end position="260"/>
    </location>
</feature>
<feature type="transmembrane region" description="Helical" evidence="2">
    <location>
        <begin position="266"/>
        <end position="286"/>
    </location>
</feature>
<feature type="domain" description="ABC transmembrane type-1" evidence="4">
    <location>
        <begin position="17"/>
        <end position="298"/>
    </location>
</feature>
<feature type="domain" description="ABC transporter" evidence="3">
    <location>
        <begin position="321"/>
        <end position="561"/>
    </location>
</feature>
<feature type="binding site" evidence="3">
    <location>
        <begin position="360"/>
        <end position="367"/>
    </location>
    <ligand>
        <name>ATP</name>
        <dbReference type="ChEBI" id="CHEBI:30616"/>
    </ligand>
</feature>
<organism>
    <name type="scientific">Bacillus subtilis (strain 168)</name>
    <dbReference type="NCBI Taxonomy" id="224308"/>
    <lineage>
        <taxon>Bacteria</taxon>
        <taxon>Bacillati</taxon>
        <taxon>Bacillota</taxon>
        <taxon>Bacilli</taxon>
        <taxon>Bacillales</taxon>
        <taxon>Bacillaceae</taxon>
        <taxon>Bacillus</taxon>
    </lineage>
</organism>
<sequence>MGKDLFRYKGMKRILTLITCLTLIQTAAIIMQAEWLSEAVTGLFNGKGITSLLPVIGFFLIAFIARHGMTVARQKIVYQYAARTGADLRKSFLDQLFRLGPRFAKKEGTGQMVTLAMEGISQFRRYLELFLPKMVSMAIVPAAVVIYVFFQDRTSAIILVAAMPILIIFMILLGLVAQRKADRQWKSYQRLSNHFVDSLRGLETLRFLGLSKSHSKNIFYVSERYRKATMSTLRVAFLSSFALDFFTMLSVATVAVFLGLRLIDGDILLGPALTALILAPEYFLPVREVGNDYHATLNGQEAGKTIQEILSQPGFKEETPLQLEAWSDQDELKLSGVSVGRSVSDIHLSFKGKKKIGIIGASGAGKSTLIDILGGFLEPDGGMIEVNGTSRSHLQDGSWQKNLLYIPQHPYIFDDTLGNNIRFYHPSASAEDTTRAAASAGLTELVNNLPDGLEGRIGEGGRALSGGQAQRVALARAFLGNRPILLLDEPTAHLDIETEYEIKETMLDLFEDKLVFLATHRLHWMLDMDEIIVLDGGRVAEIGTHNELLEKNGVYTKLVKAQLGERA</sequence>
<comment type="function">
    <text evidence="1">Part of the ABC transporter complex CydDC that exports the reduced low-molecular-weight thiols cysteine and glutathione from the cell. Export of these thiol-containing redox-active molecules may be crucial for redox homeostasis, permitting correct assembly of various respiratory complexes and formation of correct disulfide bonds in secreted proteins. CydC contains transmembrane domains (TMD), which form a pore in the membrane, and an ATP-binding domain (NBD), which is responsible for energy generation.</text>
</comment>
<comment type="catalytic activity">
    <reaction evidence="1">
        <text>L-cysteine(in) + ATP + H2O = L-cysteine(out) + ADP + phosphate + H(+)</text>
        <dbReference type="Rhea" id="RHEA:29783"/>
        <dbReference type="ChEBI" id="CHEBI:15377"/>
        <dbReference type="ChEBI" id="CHEBI:15378"/>
        <dbReference type="ChEBI" id="CHEBI:30616"/>
        <dbReference type="ChEBI" id="CHEBI:35235"/>
        <dbReference type="ChEBI" id="CHEBI:43474"/>
        <dbReference type="ChEBI" id="CHEBI:456216"/>
    </reaction>
    <physiologicalReaction direction="left-to-right" evidence="1">
        <dbReference type="Rhea" id="RHEA:29784"/>
    </physiologicalReaction>
</comment>
<comment type="catalytic activity">
    <reaction evidence="1">
        <text>glutathione(in) + ATP + H2O = glutathione(out) + ADP + phosphate + H(+)</text>
        <dbReference type="Rhea" id="RHEA:29787"/>
        <dbReference type="ChEBI" id="CHEBI:15377"/>
        <dbReference type="ChEBI" id="CHEBI:15378"/>
        <dbReference type="ChEBI" id="CHEBI:30616"/>
        <dbReference type="ChEBI" id="CHEBI:43474"/>
        <dbReference type="ChEBI" id="CHEBI:57925"/>
        <dbReference type="ChEBI" id="CHEBI:456216"/>
    </reaction>
    <physiologicalReaction direction="left-to-right" evidence="1">
        <dbReference type="Rhea" id="RHEA:29788"/>
    </physiologicalReaction>
</comment>
<comment type="subunit">
    <text evidence="1">Forms a heterodimer with CydD.</text>
</comment>
<comment type="subcellular location">
    <subcellularLocation>
        <location evidence="5">Cell membrane</location>
        <topology evidence="2">Multi-pass membrane protein</topology>
    </subcellularLocation>
</comment>
<comment type="domain">
    <text evidence="5">In CydC the ATP-binding domain (NBD) and the transmembrane domain (TMD) are fused.</text>
</comment>
<comment type="similarity">
    <text evidence="5">Belongs to the ABC transporter superfamily. Cysteine exporter (TC 3.A.1.129.1) family.</text>
</comment>
<keyword id="KW-0029">Amino-acid transport</keyword>
<keyword id="KW-0067">ATP-binding</keyword>
<keyword id="KW-1003">Cell membrane</keyword>
<keyword id="KW-0472">Membrane</keyword>
<keyword id="KW-0547">Nucleotide-binding</keyword>
<keyword id="KW-1185">Reference proteome</keyword>
<keyword id="KW-1278">Translocase</keyword>
<keyword id="KW-0812">Transmembrane</keyword>
<keyword id="KW-1133">Transmembrane helix</keyword>
<keyword id="KW-0813">Transport</keyword>
<protein>
    <recommendedName>
        <fullName evidence="1">Glutathione/L-cysteine transport system ATP-binding/permease protein CydC</fullName>
        <ecNumber evidence="1">7.4.2.-</ecNumber>
    </recommendedName>
</protein>
<gene>
    <name type="primary">cydC</name>
    <name type="synonym">yxkM</name>
    <name type="ordered locus">BSU38740</name>
</gene>
<accession>P94366</accession>